<evidence type="ECO:0000255" key="1">
    <source>
        <dbReference type="HAMAP-Rule" id="MF_00558"/>
    </source>
</evidence>
<keyword id="KW-0067">ATP-binding</keyword>
<keyword id="KW-0436">Ligase</keyword>
<keyword id="KW-0460">Magnesium</keyword>
<keyword id="KW-0479">Metal-binding</keyword>
<keyword id="KW-0547">Nucleotide-binding</keyword>
<keyword id="KW-0816">Tricarboxylic acid cycle</keyword>
<organism>
    <name type="scientific">Christiangramia forsetii (strain DSM 17595 / CGMCC 1.15422 / KT0803)</name>
    <name type="common">Gramella forsetii</name>
    <dbReference type="NCBI Taxonomy" id="411154"/>
    <lineage>
        <taxon>Bacteria</taxon>
        <taxon>Pseudomonadati</taxon>
        <taxon>Bacteroidota</taxon>
        <taxon>Flavobacteriia</taxon>
        <taxon>Flavobacteriales</taxon>
        <taxon>Flavobacteriaceae</taxon>
        <taxon>Christiangramia</taxon>
    </lineage>
</organism>
<protein>
    <recommendedName>
        <fullName evidence="1">Succinate--CoA ligase [ADP-forming] subunit beta</fullName>
        <ecNumber evidence="1">6.2.1.5</ecNumber>
    </recommendedName>
    <alternativeName>
        <fullName evidence="1">Succinyl-CoA synthetase subunit beta</fullName>
        <shortName evidence="1">SCS-beta</shortName>
    </alternativeName>
</protein>
<comment type="function">
    <text evidence="1">Succinyl-CoA synthetase functions in the citric acid cycle (TCA), coupling the hydrolysis of succinyl-CoA to the synthesis of either ATP or GTP and thus represents the only step of substrate-level phosphorylation in the TCA. The beta subunit provides nucleotide specificity of the enzyme and binds the substrate succinate, while the binding sites for coenzyme A and phosphate are found in the alpha subunit.</text>
</comment>
<comment type="catalytic activity">
    <reaction evidence="1">
        <text>succinate + ATP + CoA = succinyl-CoA + ADP + phosphate</text>
        <dbReference type="Rhea" id="RHEA:17661"/>
        <dbReference type="ChEBI" id="CHEBI:30031"/>
        <dbReference type="ChEBI" id="CHEBI:30616"/>
        <dbReference type="ChEBI" id="CHEBI:43474"/>
        <dbReference type="ChEBI" id="CHEBI:57287"/>
        <dbReference type="ChEBI" id="CHEBI:57292"/>
        <dbReference type="ChEBI" id="CHEBI:456216"/>
        <dbReference type="EC" id="6.2.1.5"/>
    </reaction>
    <physiologicalReaction direction="right-to-left" evidence="1">
        <dbReference type="Rhea" id="RHEA:17663"/>
    </physiologicalReaction>
</comment>
<comment type="catalytic activity">
    <reaction evidence="1">
        <text>GTP + succinate + CoA = succinyl-CoA + GDP + phosphate</text>
        <dbReference type="Rhea" id="RHEA:22120"/>
        <dbReference type="ChEBI" id="CHEBI:30031"/>
        <dbReference type="ChEBI" id="CHEBI:37565"/>
        <dbReference type="ChEBI" id="CHEBI:43474"/>
        <dbReference type="ChEBI" id="CHEBI:57287"/>
        <dbReference type="ChEBI" id="CHEBI:57292"/>
        <dbReference type="ChEBI" id="CHEBI:58189"/>
    </reaction>
    <physiologicalReaction direction="right-to-left" evidence="1">
        <dbReference type="Rhea" id="RHEA:22122"/>
    </physiologicalReaction>
</comment>
<comment type="cofactor">
    <cofactor evidence="1">
        <name>Mg(2+)</name>
        <dbReference type="ChEBI" id="CHEBI:18420"/>
    </cofactor>
    <text evidence="1">Binds 1 Mg(2+) ion per subunit.</text>
</comment>
<comment type="pathway">
    <text evidence="1">Carbohydrate metabolism; tricarboxylic acid cycle; succinate from succinyl-CoA (ligase route): step 1/1.</text>
</comment>
<comment type="subunit">
    <text evidence="1">Heterotetramer of two alpha and two beta subunits.</text>
</comment>
<comment type="similarity">
    <text evidence="1">Belongs to the succinate/malate CoA ligase beta subunit family.</text>
</comment>
<accession>A0LZD4</accession>
<sequence>MNIHEYQGKEILNSFGVRIQRGTVARNAKEAVEAAKELTEKTGTGWHVIKAQVHAGGRGKGGGVKLAKNLKEVEEIAGEIIGMNLVTPQTSAEGKKVHQVLVTEDVYYPGDNEPEEYYMSVLLNRATGRNMIMYSTEGGMDIETVAEETPELIFTEEIDPATGLLGFQARRIAFNLGLSGKGFKEMTKFVMSLYEAFEKSDSSLFEINPVLKTSDDLIMAVDAKVTLDDNALFRHKDYAEMRDVREENATEVEAREVGLNYVDLDGNVGCMVNGAGLAMATMDLIKQAGGEPANFLDVGGTADAKRVEEAFRLILKDDKVEAILVNIFGGIVRCDRVAQGIVDASKNMGDAMNVPIIVRLQGTNADIAKELIDNSGLKVSSAIQFQEAADKVQEVLSK</sequence>
<name>SUCC_CHRFK</name>
<dbReference type="EC" id="6.2.1.5" evidence="1"/>
<dbReference type="EMBL" id="CU207366">
    <property type="protein sequence ID" value="CAL65729.1"/>
    <property type="molecule type" value="Genomic_DNA"/>
</dbReference>
<dbReference type="RefSeq" id="WP_011708666.1">
    <property type="nucleotide sequence ID" value="NC_008571.1"/>
</dbReference>
<dbReference type="SMR" id="A0LZD4"/>
<dbReference type="STRING" id="411154.GFO_0752"/>
<dbReference type="KEGG" id="gfo:GFO_0752"/>
<dbReference type="eggNOG" id="COG0045">
    <property type="taxonomic scope" value="Bacteria"/>
</dbReference>
<dbReference type="HOGENOM" id="CLU_037430_0_2_10"/>
<dbReference type="OrthoDB" id="9802602at2"/>
<dbReference type="UniPathway" id="UPA00223">
    <property type="reaction ID" value="UER00999"/>
</dbReference>
<dbReference type="Proteomes" id="UP000000755">
    <property type="component" value="Chromosome"/>
</dbReference>
<dbReference type="GO" id="GO:0005829">
    <property type="term" value="C:cytosol"/>
    <property type="evidence" value="ECO:0007669"/>
    <property type="project" value="TreeGrafter"/>
</dbReference>
<dbReference type="GO" id="GO:0042709">
    <property type="term" value="C:succinate-CoA ligase complex"/>
    <property type="evidence" value="ECO:0007669"/>
    <property type="project" value="TreeGrafter"/>
</dbReference>
<dbReference type="GO" id="GO:0005524">
    <property type="term" value="F:ATP binding"/>
    <property type="evidence" value="ECO:0007669"/>
    <property type="project" value="UniProtKB-UniRule"/>
</dbReference>
<dbReference type="GO" id="GO:0000287">
    <property type="term" value="F:magnesium ion binding"/>
    <property type="evidence" value="ECO:0007669"/>
    <property type="project" value="UniProtKB-UniRule"/>
</dbReference>
<dbReference type="GO" id="GO:0004775">
    <property type="term" value="F:succinate-CoA ligase (ADP-forming) activity"/>
    <property type="evidence" value="ECO:0007669"/>
    <property type="project" value="UniProtKB-UniRule"/>
</dbReference>
<dbReference type="GO" id="GO:0004776">
    <property type="term" value="F:succinate-CoA ligase (GDP-forming) activity"/>
    <property type="evidence" value="ECO:0007669"/>
    <property type="project" value="RHEA"/>
</dbReference>
<dbReference type="GO" id="GO:0006104">
    <property type="term" value="P:succinyl-CoA metabolic process"/>
    <property type="evidence" value="ECO:0007669"/>
    <property type="project" value="TreeGrafter"/>
</dbReference>
<dbReference type="GO" id="GO:0006099">
    <property type="term" value="P:tricarboxylic acid cycle"/>
    <property type="evidence" value="ECO:0007669"/>
    <property type="project" value="UniProtKB-UniRule"/>
</dbReference>
<dbReference type="FunFam" id="3.30.1490.20:FF:000002">
    <property type="entry name" value="Succinate--CoA ligase [ADP-forming] subunit beta"/>
    <property type="match status" value="1"/>
</dbReference>
<dbReference type="FunFam" id="3.30.470.20:FF:000002">
    <property type="entry name" value="Succinate--CoA ligase [ADP-forming] subunit beta"/>
    <property type="match status" value="1"/>
</dbReference>
<dbReference type="FunFam" id="3.40.50.261:FF:000001">
    <property type="entry name" value="Succinate--CoA ligase [ADP-forming] subunit beta"/>
    <property type="match status" value="1"/>
</dbReference>
<dbReference type="Gene3D" id="3.30.1490.20">
    <property type="entry name" value="ATP-grasp fold, A domain"/>
    <property type="match status" value="1"/>
</dbReference>
<dbReference type="Gene3D" id="3.30.470.20">
    <property type="entry name" value="ATP-grasp fold, B domain"/>
    <property type="match status" value="1"/>
</dbReference>
<dbReference type="Gene3D" id="3.40.50.261">
    <property type="entry name" value="Succinyl-CoA synthetase domains"/>
    <property type="match status" value="1"/>
</dbReference>
<dbReference type="HAMAP" id="MF_00558">
    <property type="entry name" value="Succ_CoA_beta"/>
    <property type="match status" value="1"/>
</dbReference>
<dbReference type="InterPro" id="IPR013650">
    <property type="entry name" value="ATP-grasp_succ-CoA_synth-type"/>
</dbReference>
<dbReference type="InterPro" id="IPR013815">
    <property type="entry name" value="ATP_grasp_subdomain_1"/>
</dbReference>
<dbReference type="InterPro" id="IPR017866">
    <property type="entry name" value="Succ-CoA_synthase_bsu_CS"/>
</dbReference>
<dbReference type="InterPro" id="IPR005811">
    <property type="entry name" value="SUCC_ACL_C"/>
</dbReference>
<dbReference type="InterPro" id="IPR005809">
    <property type="entry name" value="Succ_CoA_ligase-like_bsu"/>
</dbReference>
<dbReference type="InterPro" id="IPR016102">
    <property type="entry name" value="Succinyl-CoA_synth-like"/>
</dbReference>
<dbReference type="NCBIfam" id="NF001913">
    <property type="entry name" value="PRK00696.1"/>
    <property type="match status" value="1"/>
</dbReference>
<dbReference type="NCBIfam" id="TIGR01016">
    <property type="entry name" value="sucCoAbeta"/>
    <property type="match status" value="1"/>
</dbReference>
<dbReference type="PANTHER" id="PTHR11815:SF10">
    <property type="entry name" value="SUCCINATE--COA LIGASE [GDP-FORMING] SUBUNIT BETA, MITOCHONDRIAL"/>
    <property type="match status" value="1"/>
</dbReference>
<dbReference type="PANTHER" id="PTHR11815">
    <property type="entry name" value="SUCCINYL-COA SYNTHETASE BETA CHAIN"/>
    <property type="match status" value="1"/>
</dbReference>
<dbReference type="Pfam" id="PF08442">
    <property type="entry name" value="ATP-grasp_2"/>
    <property type="match status" value="1"/>
</dbReference>
<dbReference type="Pfam" id="PF00549">
    <property type="entry name" value="Ligase_CoA"/>
    <property type="match status" value="1"/>
</dbReference>
<dbReference type="PIRSF" id="PIRSF001554">
    <property type="entry name" value="SucCS_beta"/>
    <property type="match status" value="1"/>
</dbReference>
<dbReference type="SUPFAM" id="SSF56059">
    <property type="entry name" value="Glutathione synthetase ATP-binding domain-like"/>
    <property type="match status" value="1"/>
</dbReference>
<dbReference type="SUPFAM" id="SSF52210">
    <property type="entry name" value="Succinyl-CoA synthetase domains"/>
    <property type="match status" value="1"/>
</dbReference>
<dbReference type="PROSITE" id="PS01217">
    <property type="entry name" value="SUCCINYL_COA_LIG_3"/>
    <property type="match status" value="1"/>
</dbReference>
<reference key="1">
    <citation type="journal article" date="2006" name="Environ. Microbiol.">
        <title>Whole genome analysis of the marine Bacteroidetes'Gramella forsetii' reveals adaptations to degradation of polymeric organic matter.</title>
        <authorList>
            <person name="Bauer M."/>
            <person name="Kube M."/>
            <person name="Teeling H."/>
            <person name="Richter M."/>
            <person name="Lombardot T."/>
            <person name="Allers E."/>
            <person name="Wuerdemann C.A."/>
            <person name="Quast C."/>
            <person name="Kuhl H."/>
            <person name="Knaust F."/>
            <person name="Woebken D."/>
            <person name="Bischof K."/>
            <person name="Mussmann M."/>
            <person name="Choudhuri J.V."/>
            <person name="Meyer F."/>
            <person name="Reinhardt R."/>
            <person name="Amann R.I."/>
            <person name="Gloeckner F.O."/>
        </authorList>
    </citation>
    <scope>NUCLEOTIDE SEQUENCE [LARGE SCALE GENOMIC DNA]</scope>
    <source>
        <strain>DSM 17595 / CGMCC 1.15422 / KT0803</strain>
    </source>
</reference>
<feature type="chain" id="PRO_1000082096" description="Succinate--CoA ligase [ADP-forming] subunit beta">
    <location>
        <begin position="1"/>
        <end position="398"/>
    </location>
</feature>
<feature type="domain" description="ATP-grasp" evidence="1">
    <location>
        <begin position="9"/>
        <end position="253"/>
    </location>
</feature>
<feature type="binding site" evidence="1">
    <location>
        <position position="50"/>
    </location>
    <ligand>
        <name>ATP</name>
        <dbReference type="ChEBI" id="CHEBI:30616"/>
    </ligand>
</feature>
<feature type="binding site" evidence="1">
    <location>
        <begin position="57"/>
        <end position="59"/>
    </location>
    <ligand>
        <name>ATP</name>
        <dbReference type="ChEBI" id="CHEBI:30616"/>
    </ligand>
</feature>
<feature type="binding site" evidence="1">
    <location>
        <position position="106"/>
    </location>
    <ligand>
        <name>ATP</name>
        <dbReference type="ChEBI" id="CHEBI:30616"/>
    </ligand>
</feature>
<feature type="binding site" evidence="1">
    <location>
        <position position="116"/>
    </location>
    <ligand>
        <name>ATP</name>
        <dbReference type="ChEBI" id="CHEBI:30616"/>
    </ligand>
</feature>
<feature type="binding site" evidence="1">
    <location>
        <position position="208"/>
    </location>
    <ligand>
        <name>Mg(2+)</name>
        <dbReference type="ChEBI" id="CHEBI:18420"/>
    </ligand>
</feature>
<feature type="binding site" evidence="1">
    <location>
        <position position="222"/>
    </location>
    <ligand>
        <name>Mg(2+)</name>
        <dbReference type="ChEBI" id="CHEBI:18420"/>
    </ligand>
</feature>
<feature type="binding site" evidence="1">
    <location>
        <position position="273"/>
    </location>
    <ligand>
        <name>substrate</name>
        <note>ligand shared with subunit alpha</note>
    </ligand>
</feature>
<feature type="binding site" evidence="1">
    <location>
        <begin position="330"/>
        <end position="332"/>
    </location>
    <ligand>
        <name>substrate</name>
        <note>ligand shared with subunit alpha</note>
    </ligand>
</feature>
<proteinExistence type="inferred from homology"/>
<gene>
    <name evidence="1" type="primary">sucC</name>
    <name type="ordered locus">GFO_0752</name>
</gene>